<evidence type="ECO:0000255" key="1">
    <source>
        <dbReference type="HAMAP-Rule" id="MF_01013"/>
    </source>
</evidence>
<name>HIS6_CITK8</name>
<proteinExistence type="inferred from homology"/>
<dbReference type="EC" id="4.3.2.10" evidence="1"/>
<dbReference type="EMBL" id="CP000822">
    <property type="protein sequence ID" value="ABV11912.1"/>
    <property type="molecule type" value="Genomic_DNA"/>
</dbReference>
<dbReference type="RefSeq" id="WP_012131735.1">
    <property type="nucleotide sequence ID" value="NC_009792.1"/>
</dbReference>
<dbReference type="SMR" id="A8AEJ9"/>
<dbReference type="STRING" id="290338.CKO_00760"/>
<dbReference type="GeneID" id="45134962"/>
<dbReference type="KEGG" id="cko:CKO_00760"/>
<dbReference type="HOGENOM" id="CLU_048577_4_0_6"/>
<dbReference type="OrthoDB" id="9781903at2"/>
<dbReference type="UniPathway" id="UPA00031">
    <property type="reaction ID" value="UER00010"/>
</dbReference>
<dbReference type="Proteomes" id="UP000008148">
    <property type="component" value="Chromosome"/>
</dbReference>
<dbReference type="GO" id="GO:0005737">
    <property type="term" value="C:cytoplasm"/>
    <property type="evidence" value="ECO:0007669"/>
    <property type="project" value="UniProtKB-SubCell"/>
</dbReference>
<dbReference type="GO" id="GO:0000107">
    <property type="term" value="F:imidazoleglycerol-phosphate synthase activity"/>
    <property type="evidence" value="ECO:0007669"/>
    <property type="project" value="UniProtKB-UniRule"/>
</dbReference>
<dbReference type="GO" id="GO:0016829">
    <property type="term" value="F:lyase activity"/>
    <property type="evidence" value="ECO:0007669"/>
    <property type="project" value="UniProtKB-KW"/>
</dbReference>
<dbReference type="GO" id="GO:0000105">
    <property type="term" value="P:L-histidine biosynthetic process"/>
    <property type="evidence" value="ECO:0007669"/>
    <property type="project" value="UniProtKB-UniRule"/>
</dbReference>
<dbReference type="CDD" id="cd04731">
    <property type="entry name" value="HisF"/>
    <property type="match status" value="1"/>
</dbReference>
<dbReference type="FunFam" id="3.20.20.70:FF:000006">
    <property type="entry name" value="Imidazole glycerol phosphate synthase subunit HisF"/>
    <property type="match status" value="1"/>
</dbReference>
<dbReference type="Gene3D" id="3.20.20.70">
    <property type="entry name" value="Aldolase class I"/>
    <property type="match status" value="1"/>
</dbReference>
<dbReference type="HAMAP" id="MF_01013">
    <property type="entry name" value="HisF"/>
    <property type="match status" value="1"/>
</dbReference>
<dbReference type="InterPro" id="IPR013785">
    <property type="entry name" value="Aldolase_TIM"/>
</dbReference>
<dbReference type="InterPro" id="IPR006062">
    <property type="entry name" value="His_biosynth"/>
</dbReference>
<dbReference type="InterPro" id="IPR004651">
    <property type="entry name" value="HisF"/>
</dbReference>
<dbReference type="InterPro" id="IPR050064">
    <property type="entry name" value="IGPS_HisA/HisF"/>
</dbReference>
<dbReference type="InterPro" id="IPR011060">
    <property type="entry name" value="RibuloseP-bd_barrel"/>
</dbReference>
<dbReference type="NCBIfam" id="TIGR00735">
    <property type="entry name" value="hisF"/>
    <property type="match status" value="1"/>
</dbReference>
<dbReference type="PANTHER" id="PTHR21235:SF2">
    <property type="entry name" value="IMIDAZOLE GLYCEROL PHOSPHATE SYNTHASE HISHF"/>
    <property type="match status" value="1"/>
</dbReference>
<dbReference type="PANTHER" id="PTHR21235">
    <property type="entry name" value="IMIDAZOLE GLYCEROL PHOSPHATE SYNTHASE SUBUNIT HISF/H IGP SYNTHASE SUBUNIT HISF/H"/>
    <property type="match status" value="1"/>
</dbReference>
<dbReference type="Pfam" id="PF00977">
    <property type="entry name" value="His_biosynth"/>
    <property type="match status" value="1"/>
</dbReference>
<dbReference type="SUPFAM" id="SSF51366">
    <property type="entry name" value="Ribulose-phoshate binding barrel"/>
    <property type="match status" value="1"/>
</dbReference>
<accession>A8AEJ9</accession>
<organism>
    <name type="scientific">Citrobacter koseri (strain ATCC BAA-895 / CDC 4225-83 / SGSC4696)</name>
    <dbReference type="NCBI Taxonomy" id="290338"/>
    <lineage>
        <taxon>Bacteria</taxon>
        <taxon>Pseudomonadati</taxon>
        <taxon>Pseudomonadota</taxon>
        <taxon>Gammaproteobacteria</taxon>
        <taxon>Enterobacterales</taxon>
        <taxon>Enterobacteriaceae</taxon>
        <taxon>Citrobacter</taxon>
    </lineage>
</organism>
<protein>
    <recommendedName>
        <fullName evidence="1">Imidazole glycerol phosphate synthase subunit HisF</fullName>
        <ecNumber evidence="1">4.3.2.10</ecNumber>
    </recommendedName>
    <alternativeName>
        <fullName evidence="1">IGP synthase cyclase subunit</fullName>
    </alternativeName>
    <alternativeName>
        <fullName evidence="1">IGP synthase subunit HisF</fullName>
    </alternativeName>
    <alternativeName>
        <fullName evidence="1">ImGP synthase subunit HisF</fullName>
        <shortName evidence="1">IGPS subunit HisF</shortName>
    </alternativeName>
</protein>
<feature type="chain" id="PRO_1000063045" description="Imidazole glycerol phosphate synthase subunit HisF">
    <location>
        <begin position="1"/>
        <end position="258"/>
    </location>
</feature>
<feature type="active site" evidence="1">
    <location>
        <position position="11"/>
    </location>
</feature>
<feature type="active site" evidence="1">
    <location>
        <position position="130"/>
    </location>
</feature>
<reference key="1">
    <citation type="submission" date="2007-08" db="EMBL/GenBank/DDBJ databases">
        <authorList>
            <consortium name="The Citrobacter koseri Genome Sequencing Project"/>
            <person name="McClelland M."/>
            <person name="Sanderson E.K."/>
            <person name="Porwollik S."/>
            <person name="Spieth J."/>
            <person name="Clifton W.S."/>
            <person name="Latreille P."/>
            <person name="Courtney L."/>
            <person name="Wang C."/>
            <person name="Pepin K."/>
            <person name="Bhonagiri V."/>
            <person name="Nash W."/>
            <person name="Johnson M."/>
            <person name="Thiruvilangam P."/>
            <person name="Wilson R."/>
        </authorList>
    </citation>
    <scope>NUCLEOTIDE SEQUENCE [LARGE SCALE GENOMIC DNA]</scope>
    <source>
        <strain>ATCC BAA-895 / CDC 4225-83 / SGSC4696</strain>
    </source>
</reference>
<sequence>MLAKRIIPCLDVRDGQVVKGVQFRNHEIIGDIVPLAKRYADEGADELVFYDITASSDGRVVDKSWVSRVAEVIDIPFCVAGGIRSIDDAAKILSFGADKISINSPALADPTLITRLADRFGVQCIVVGIDTWFDAETGKYHVNQYTGDESRTRVTQWETLDWVQEVQKRGAGEIVLNMMNQDGVRNGYDLEQLKKVRDVCHVPLIASGGAGTMEHFLEAFRDTDVDGALAASVFHKQIINIGELKAYLEAQGVEIRIC</sequence>
<gene>
    <name evidence="1" type="primary">hisF</name>
    <name type="ordered locus">CKO_00760</name>
</gene>
<comment type="function">
    <text evidence="1">IGPS catalyzes the conversion of PRFAR and glutamine to IGP, AICAR and glutamate. The HisF subunit catalyzes the cyclization activity that produces IGP and AICAR from PRFAR using the ammonia provided by the HisH subunit.</text>
</comment>
<comment type="catalytic activity">
    <reaction evidence="1">
        <text>5-[(5-phospho-1-deoxy-D-ribulos-1-ylimino)methylamino]-1-(5-phospho-beta-D-ribosyl)imidazole-4-carboxamide + L-glutamine = D-erythro-1-(imidazol-4-yl)glycerol 3-phosphate + 5-amino-1-(5-phospho-beta-D-ribosyl)imidazole-4-carboxamide + L-glutamate + H(+)</text>
        <dbReference type="Rhea" id="RHEA:24793"/>
        <dbReference type="ChEBI" id="CHEBI:15378"/>
        <dbReference type="ChEBI" id="CHEBI:29985"/>
        <dbReference type="ChEBI" id="CHEBI:58278"/>
        <dbReference type="ChEBI" id="CHEBI:58359"/>
        <dbReference type="ChEBI" id="CHEBI:58475"/>
        <dbReference type="ChEBI" id="CHEBI:58525"/>
        <dbReference type="EC" id="4.3.2.10"/>
    </reaction>
</comment>
<comment type="pathway">
    <text evidence="1">Amino-acid biosynthesis; L-histidine biosynthesis; L-histidine from 5-phospho-alpha-D-ribose 1-diphosphate: step 5/9.</text>
</comment>
<comment type="subunit">
    <text evidence="1">Heterodimer of HisH and HisF.</text>
</comment>
<comment type="subcellular location">
    <subcellularLocation>
        <location evidence="1">Cytoplasm</location>
    </subcellularLocation>
</comment>
<comment type="similarity">
    <text evidence="1">Belongs to the HisA/HisF family.</text>
</comment>
<keyword id="KW-0028">Amino-acid biosynthesis</keyword>
<keyword id="KW-0963">Cytoplasm</keyword>
<keyword id="KW-0368">Histidine biosynthesis</keyword>
<keyword id="KW-0456">Lyase</keyword>
<keyword id="KW-1185">Reference proteome</keyword>